<proteinExistence type="evidence at protein level"/>
<evidence type="ECO:0000250" key="1"/>
<evidence type="ECO:0000255" key="2"/>
<evidence type="ECO:0000256" key="3">
    <source>
        <dbReference type="SAM" id="MobiDB-lite"/>
    </source>
</evidence>
<evidence type="ECO:0000269" key="4">
    <source>
    </source>
</evidence>
<evidence type="ECO:0000269" key="5">
    <source>
    </source>
</evidence>
<evidence type="ECO:0000269" key="6">
    <source>
    </source>
</evidence>
<evidence type="ECO:0000305" key="7"/>
<name>MNN2_CANAL</name>
<feature type="chain" id="PRO_0000428634" description="Alpha-1,2-mannosyltransferase MNN2">
    <location>
        <begin position="1"/>
        <end position="597"/>
    </location>
</feature>
<feature type="topological domain" description="Cytoplasmic" evidence="2">
    <location>
        <begin position="1"/>
        <end position="6"/>
    </location>
</feature>
<feature type="transmembrane region" description="Helical" evidence="2">
    <location>
        <begin position="7"/>
        <end position="27"/>
    </location>
</feature>
<feature type="topological domain" description="Extracellular" evidence="2">
    <location>
        <begin position="28"/>
        <end position="597"/>
    </location>
</feature>
<feature type="region of interest" description="Disordered" evidence="3">
    <location>
        <begin position="39"/>
        <end position="89"/>
    </location>
</feature>
<feature type="glycosylation site" description="N-linked (GlcNAc...) asparagine" evidence="2">
    <location>
        <position position="382"/>
    </location>
</feature>
<sequence length="597" mass="69165">MIAKQKIKILIGVIIVIATYHFIVSSNVRSKDLSDLVDLGSSDKSTTENERPKNNIVTNNRLDNPPNEDIPHAEPDSPPQEPPKSGNKPDFSIFFEGLEKFAIKQPGIKDKYTSEKAKEKFSTDDNFLFGKEYLENVLDIPQATFKELKDSHKRYVDEHIPKMLQRVKTFGSLAPSDKEWESYKGSSGYIIVGGGRFTWLSFLVIKQLRATGAKLPVEMFIATESDYEKEFCEKVLPKYNARCNVFDYKLADDLKKRFDIGGYQYKMLALLSSKFENVLYLDSDNFPTRNVDYLFESDLYKENNLLLWPDAWARTTNPKYYEIAGVPVKENKLRYSKYDEKQAGGKDKLKPLSEYTFKDSWYHDFEGTLPDPTSETGMFMVNKSSHLKTLLLCLYYNVFGPQYYYPLLTQGSAGEGDKETFIAAAHVMKEPWYQCARQFKWTGYVSKVDNKFTSKALAHYDPVQAQDTTRQDVDIIFMHLSYPKFYPNWLADNHDLVYADTDEHIRMYSSINKNVGYDFDLRVMQFFTEGLCPNYYDSKTGKPIENIPHIDYTNDYMGNHLMYVKDEEQNNIDRCNKVFIPHLKWLKETAEIPTVVS</sequence>
<accession>Q59WF4</accession>
<accession>A0A1D8PEZ4</accession>
<accession>Q59WL2</accession>
<organism>
    <name type="scientific">Candida albicans (strain SC5314 / ATCC MYA-2876)</name>
    <name type="common">Yeast</name>
    <dbReference type="NCBI Taxonomy" id="237561"/>
    <lineage>
        <taxon>Eukaryota</taxon>
        <taxon>Fungi</taxon>
        <taxon>Dikarya</taxon>
        <taxon>Ascomycota</taxon>
        <taxon>Saccharomycotina</taxon>
        <taxon>Pichiomycetes</taxon>
        <taxon>Debaryomycetaceae</taxon>
        <taxon>Candida/Lodderomyces clade</taxon>
        <taxon>Candida</taxon>
    </lineage>
</organism>
<dbReference type="EC" id="2.4.1.-"/>
<dbReference type="EMBL" id="CP017623">
    <property type="protein sequence ID" value="AOW26699.1"/>
    <property type="molecule type" value="Genomic_DNA"/>
</dbReference>
<dbReference type="RefSeq" id="XP_713952.2">
    <property type="nucleotide sequence ID" value="XM_708859.2"/>
</dbReference>
<dbReference type="STRING" id="237561.Q59WF4"/>
<dbReference type="GlyCosmos" id="Q59WF4">
    <property type="glycosylation" value="1 site, No reported glycans"/>
</dbReference>
<dbReference type="EnsemblFungi" id="C1_10720C_A-T">
    <property type="protein sequence ID" value="C1_10720C_A-T-p1"/>
    <property type="gene ID" value="C1_10720C_A"/>
</dbReference>
<dbReference type="GeneID" id="3644405"/>
<dbReference type="KEGG" id="cal:CAALFM_C110720CA"/>
<dbReference type="CGD" id="CAL0000190919">
    <property type="gene designation" value="MNN2"/>
</dbReference>
<dbReference type="VEuPathDB" id="FungiDB:C1_10720C_A"/>
<dbReference type="eggNOG" id="ENOG502RGFY">
    <property type="taxonomic scope" value="Eukaryota"/>
</dbReference>
<dbReference type="HOGENOM" id="CLU_013298_2_0_1"/>
<dbReference type="InParanoid" id="Q59WF4"/>
<dbReference type="OrthoDB" id="430354at2759"/>
<dbReference type="UniPathway" id="UPA00378"/>
<dbReference type="PHI-base" id="PHI:2883"/>
<dbReference type="PRO" id="PR:Q59WF4"/>
<dbReference type="Proteomes" id="UP000000559">
    <property type="component" value="Chromosome 1"/>
</dbReference>
<dbReference type="GO" id="GO:0005794">
    <property type="term" value="C:Golgi apparatus"/>
    <property type="evidence" value="ECO:0000318"/>
    <property type="project" value="GO_Central"/>
</dbReference>
<dbReference type="GO" id="GO:0000139">
    <property type="term" value="C:Golgi membrane"/>
    <property type="evidence" value="ECO:0007669"/>
    <property type="project" value="UniProtKB-SubCell"/>
</dbReference>
<dbReference type="GO" id="GO:0000026">
    <property type="term" value="F:alpha-1,2-mannosyltransferase activity"/>
    <property type="evidence" value="ECO:0000314"/>
    <property type="project" value="CGD"/>
</dbReference>
<dbReference type="GO" id="GO:0009267">
    <property type="term" value="P:cellular response to starvation"/>
    <property type="evidence" value="ECO:0000315"/>
    <property type="project" value="CGD"/>
</dbReference>
<dbReference type="GO" id="GO:0030447">
    <property type="term" value="P:filamentous growth"/>
    <property type="evidence" value="ECO:0000315"/>
    <property type="project" value="CGD"/>
</dbReference>
<dbReference type="GO" id="GO:0044182">
    <property type="term" value="P:filamentous growth of a population of unicellular organisms"/>
    <property type="evidence" value="ECO:0000315"/>
    <property type="project" value="CGD"/>
</dbReference>
<dbReference type="GO" id="GO:0036180">
    <property type="term" value="P:filamentous growth of a population of unicellular organisms in response to biotic stimulus"/>
    <property type="evidence" value="ECO:0000315"/>
    <property type="project" value="CGD"/>
</dbReference>
<dbReference type="GO" id="GO:0036178">
    <property type="term" value="P:filamentous growth of a population of unicellular organisms in response to neutral pH"/>
    <property type="evidence" value="ECO:0000315"/>
    <property type="project" value="CGD"/>
</dbReference>
<dbReference type="GO" id="GO:0036170">
    <property type="term" value="P:filamentous growth of a population of unicellular organisms in response to starvation"/>
    <property type="evidence" value="ECO:0000315"/>
    <property type="project" value="CGD"/>
</dbReference>
<dbReference type="GO" id="GO:0034755">
    <property type="term" value="P:iron ion transmembrane transport"/>
    <property type="evidence" value="ECO:0000316"/>
    <property type="project" value="CGD"/>
</dbReference>
<dbReference type="GO" id="GO:0046354">
    <property type="term" value="P:mannan biosynthetic process"/>
    <property type="evidence" value="ECO:0000315"/>
    <property type="project" value="CGD"/>
</dbReference>
<dbReference type="GO" id="GO:0006486">
    <property type="term" value="P:protein glycosylation"/>
    <property type="evidence" value="ECO:0000250"/>
    <property type="project" value="CGD"/>
</dbReference>
<dbReference type="GO" id="GO:0035268">
    <property type="term" value="P:protein mannosylation"/>
    <property type="evidence" value="ECO:0000315"/>
    <property type="project" value="CGD"/>
</dbReference>
<dbReference type="Gene3D" id="3.90.550.10">
    <property type="entry name" value="Spore Coat Polysaccharide Biosynthesis Protein SpsA, Chain A"/>
    <property type="match status" value="1"/>
</dbReference>
<dbReference type="InterPro" id="IPR022751">
    <property type="entry name" value="Alpha_mannosyltransferase"/>
</dbReference>
<dbReference type="InterPro" id="IPR029044">
    <property type="entry name" value="Nucleotide-diphossugar_trans"/>
</dbReference>
<dbReference type="PANTHER" id="PTHR31646">
    <property type="entry name" value="ALPHA-1,2-MANNOSYLTRANSFERASE MNN2"/>
    <property type="match status" value="1"/>
</dbReference>
<dbReference type="PANTHER" id="PTHR31646:SF1">
    <property type="entry name" value="ALPHA-1,2-MANNOSYLTRANSFERASE MNN2"/>
    <property type="match status" value="1"/>
</dbReference>
<dbReference type="Pfam" id="PF11051">
    <property type="entry name" value="Mannosyl_trans3"/>
    <property type="match status" value="1"/>
</dbReference>
<dbReference type="SUPFAM" id="SSF53448">
    <property type="entry name" value="Nucleotide-diphospho-sugar transferases"/>
    <property type="match status" value="1"/>
</dbReference>
<reference key="1">
    <citation type="journal article" date="2004" name="Proc. Natl. Acad. Sci. U.S.A.">
        <title>The diploid genome sequence of Candida albicans.</title>
        <authorList>
            <person name="Jones T."/>
            <person name="Federspiel N.A."/>
            <person name="Chibana H."/>
            <person name="Dungan J."/>
            <person name="Kalman S."/>
            <person name="Magee B.B."/>
            <person name="Newport G."/>
            <person name="Thorstenson Y.R."/>
            <person name="Agabian N."/>
            <person name="Magee P.T."/>
            <person name="Davis R.W."/>
            <person name="Scherer S."/>
        </authorList>
    </citation>
    <scope>NUCLEOTIDE SEQUENCE [LARGE SCALE GENOMIC DNA]</scope>
    <source>
        <strain>SC5314 / ATCC MYA-2876</strain>
    </source>
</reference>
<reference key="2">
    <citation type="journal article" date="2007" name="Genome Biol.">
        <title>Assembly of the Candida albicans genome into sixteen supercontigs aligned on the eight chromosomes.</title>
        <authorList>
            <person name="van het Hoog M."/>
            <person name="Rast T.J."/>
            <person name="Martchenko M."/>
            <person name="Grindle S."/>
            <person name="Dignard D."/>
            <person name="Hogues H."/>
            <person name="Cuomo C."/>
            <person name="Berriman M."/>
            <person name="Scherer S."/>
            <person name="Magee B.B."/>
            <person name="Whiteway M."/>
            <person name="Chibana H."/>
            <person name="Nantel A."/>
            <person name="Magee P.T."/>
        </authorList>
    </citation>
    <scope>GENOME REANNOTATION</scope>
    <source>
        <strain>SC5314 / ATCC MYA-2876</strain>
    </source>
</reference>
<reference key="3">
    <citation type="journal article" date="2013" name="Genome Biol.">
        <title>Assembly of a phased diploid Candida albicans genome facilitates allele-specific measurements and provides a simple model for repeat and indel structure.</title>
        <authorList>
            <person name="Muzzey D."/>
            <person name="Schwartz K."/>
            <person name="Weissman J.S."/>
            <person name="Sherlock G."/>
        </authorList>
    </citation>
    <scope>NUCLEOTIDE SEQUENCE [LARGE SCALE GENOMIC DNA]</scope>
    <scope>GENOME REANNOTATION</scope>
    <source>
        <strain>SC5314 / ATCC MYA-2876</strain>
    </source>
</reference>
<reference key="4">
    <citation type="journal article" date="2005" name="Biochem. J.">
        <title>Identification and functional characterization of a novel Candida albicans gene CaMNN5 that suppresses the iron-dependent growth defect of Saccharomyces cerevisiae aft1Delta mutant.</title>
        <authorList>
            <person name="Bai C."/>
            <person name="Chan F.Y."/>
            <person name="Wang Y."/>
        </authorList>
    </citation>
    <scope>FUNCTION</scope>
</reference>
<reference key="5">
    <citation type="journal article" date="2006" name="Eukaryot. Cell">
        <title>MNN5 encodes an iron-regulated alpha-1,2-mannosyltransferase important for protein glycosylation, cell wall integrity, morphogenesis, and virulence in Candida albicans.</title>
        <authorList>
            <person name="Bai C."/>
            <person name="Xu X.L."/>
            <person name="Chan F.Y."/>
            <person name="Lee R.T."/>
            <person name="Wang Y."/>
        </authorList>
    </citation>
    <scope>FUNCTION</scope>
    <scope>CATALYTIC ACTIVITY</scope>
    <scope>COFACTOR</scope>
    <scope>ACTIVITY REGULATION</scope>
    <scope>DISRUPTION PHENOTYPE</scope>
</reference>
<reference key="6">
    <citation type="journal article" date="2013" name="PLoS Pathog.">
        <title>The Mnn2 mannosyltransferase family modulates mannoprotein fibril length, immune recognition and virulence of Candida albicans.</title>
        <authorList>
            <person name="Hall R.A."/>
            <person name="Bates S."/>
            <person name="Lenardon M.D."/>
            <person name="Maccallum D.M."/>
            <person name="Wagener J."/>
            <person name="Lowman D.W."/>
            <person name="Kruppa M.D."/>
            <person name="Williams D.L."/>
            <person name="Odds F.C."/>
            <person name="Brown A.J."/>
            <person name="Gow N.A."/>
        </authorList>
    </citation>
    <scope>FUNCTION</scope>
</reference>
<protein>
    <recommendedName>
        <fullName>Alpha-1,2-mannosyltransferase MNN2</fullName>
        <ecNumber>2.4.1.-</ecNumber>
    </recommendedName>
</protein>
<keyword id="KW-0325">Glycoprotein</keyword>
<keyword id="KW-0333">Golgi apparatus</keyword>
<keyword id="KW-0408">Iron</keyword>
<keyword id="KW-0464">Manganese</keyword>
<keyword id="KW-0472">Membrane</keyword>
<keyword id="KW-1185">Reference proteome</keyword>
<keyword id="KW-0735">Signal-anchor</keyword>
<keyword id="KW-0808">Transferase</keyword>
<keyword id="KW-0812">Transmembrane</keyword>
<keyword id="KW-1133">Transmembrane helix</keyword>
<comment type="function">
    <text evidence="4 5 6">Alpha-1,2-mannosyltransferase required for cell wall integrity. Responsible for addition of the first alpha-1,2-linked mannose to form the branches on the mannan backbone of oligosaccharides. Addition of alpha-1,2-mannose is required for stabilization of the alpha-1,6-mannose backbone and hence regulates mannan fibril length; and is important for both immune recognition and virulence. Promotes iron uptake and usage along the endocytosis pathway under iron-limiting conditions.</text>
</comment>
<comment type="cofactor">
    <cofactor evidence="5">
        <name>Mn(2+)</name>
        <dbReference type="ChEBI" id="CHEBI:29035"/>
    </cofactor>
</comment>
<comment type="activity regulation">
    <text evidence="5">Enzyme activity is regulated by iron.</text>
</comment>
<comment type="pathway">
    <text>Protein modification; protein glycosylation.</text>
</comment>
<comment type="subcellular location">
    <subcellularLocation>
        <location evidence="1">Golgi apparatus membrane</location>
        <topology evidence="1">Single-pass type II membrane protein</topology>
    </subcellularLocation>
</comment>
<comment type="disruption phenotype">
    <text evidence="5">Decreases the ability to extend O-linked, and possibly also N-linked, mannans. Leads to hypersensitivity to cell wall-damaging agents, and to a reduction of cell wall mannosylphosphate. Also leads to resistance to killing by the iron-chelating protein lactoferrin.</text>
</comment>
<comment type="similarity">
    <text evidence="7">Belongs to the MNN1/MNT family.</text>
</comment>
<gene>
    <name type="primary">MNN2</name>
    <name type="synonym">MNN25</name>
    <name type="synonym">MNN5</name>
    <name type="ordered locus">CAALFM_C110720CA</name>
    <name type="ORF">CaO19.2347</name>
    <name type="ORF">CaO19.9883</name>
</gene>